<reference key="1">
    <citation type="submission" date="2009-01" db="EMBL/GenBank/DDBJ databases">
        <title>Complete sequence of chromosome of Methylobacterium nodulans ORS 2060.</title>
        <authorList>
            <consortium name="US DOE Joint Genome Institute"/>
            <person name="Lucas S."/>
            <person name="Copeland A."/>
            <person name="Lapidus A."/>
            <person name="Glavina del Rio T."/>
            <person name="Dalin E."/>
            <person name="Tice H."/>
            <person name="Bruce D."/>
            <person name="Goodwin L."/>
            <person name="Pitluck S."/>
            <person name="Sims D."/>
            <person name="Brettin T."/>
            <person name="Detter J.C."/>
            <person name="Han C."/>
            <person name="Larimer F."/>
            <person name="Land M."/>
            <person name="Hauser L."/>
            <person name="Kyrpides N."/>
            <person name="Ivanova N."/>
            <person name="Marx C.J."/>
            <person name="Richardson P."/>
        </authorList>
    </citation>
    <scope>NUCLEOTIDE SEQUENCE [LARGE SCALE GENOMIC DNA]</scope>
    <source>
        <strain>LMG 21967 / CNCM I-2342 / ORS 2060</strain>
    </source>
</reference>
<protein>
    <recommendedName>
        <fullName evidence="1">Large ribosomal subunit protein bL9</fullName>
    </recommendedName>
    <alternativeName>
        <fullName evidence="2">50S ribosomal protein L9</fullName>
    </alternativeName>
</protein>
<sequence length="189" mass="20845">MEVILLERVAKLGQMGETVKVRPGFARNYLLARGKALRATEANKKRFEDQRIQLEARNLERRNEAQAVAEKLDGQSFVLIRQSGETGVLYGSVSTRDLAEVLTQNGFTVGRDQFSLNQPIKTLGLHTVPVVLHPEVEVTVTVNVARSPEEAERQARGESTVVRDELDLEELGLEVGAALAEAGPEGEER</sequence>
<keyword id="KW-1185">Reference proteome</keyword>
<keyword id="KW-0687">Ribonucleoprotein</keyword>
<keyword id="KW-0689">Ribosomal protein</keyword>
<keyword id="KW-0694">RNA-binding</keyword>
<keyword id="KW-0699">rRNA-binding</keyword>
<comment type="function">
    <text evidence="1">Binds to the 23S rRNA.</text>
</comment>
<comment type="similarity">
    <text evidence="1">Belongs to the bacterial ribosomal protein bL9 family.</text>
</comment>
<gene>
    <name evidence="1" type="primary">rplI</name>
    <name type="ordered locus">Mnod_4634</name>
</gene>
<accession>B8IEC9</accession>
<feature type="chain" id="PRO_1000196253" description="Large ribosomal subunit protein bL9">
    <location>
        <begin position="1"/>
        <end position="189"/>
    </location>
</feature>
<organism>
    <name type="scientific">Methylobacterium nodulans (strain LMG 21967 / CNCM I-2342 / ORS 2060)</name>
    <dbReference type="NCBI Taxonomy" id="460265"/>
    <lineage>
        <taxon>Bacteria</taxon>
        <taxon>Pseudomonadati</taxon>
        <taxon>Pseudomonadota</taxon>
        <taxon>Alphaproteobacteria</taxon>
        <taxon>Hyphomicrobiales</taxon>
        <taxon>Methylobacteriaceae</taxon>
        <taxon>Methylobacterium</taxon>
    </lineage>
</organism>
<evidence type="ECO:0000255" key="1">
    <source>
        <dbReference type="HAMAP-Rule" id="MF_00503"/>
    </source>
</evidence>
<evidence type="ECO:0000305" key="2"/>
<name>RL9_METNO</name>
<proteinExistence type="inferred from homology"/>
<dbReference type="EMBL" id="CP001349">
    <property type="protein sequence ID" value="ACL59501.1"/>
    <property type="molecule type" value="Genomic_DNA"/>
</dbReference>
<dbReference type="RefSeq" id="WP_015931137.1">
    <property type="nucleotide sequence ID" value="NC_011894.1"/>
</dbReference>
<dbReference type="SMR" id="B8IEC9"/>
<dbReference type="STRING" id="460265.Mnod_4634"/>
<dbReference type="KEGG" id="mno:Mnod_4634"/>
<dbReference type="eggNOG" id="COG0359">
    <property type="taxonomic scope" value="Bacteria"/>
</dbReference>
<dbReference type="HOGENOM" id="CLU_078938_1_0_5"/>
<dbReference type="OrthoDB" id="9788336at2"/>
<dbReference type="Proteomes" id="UP000008207">
    <property type="component" value="Chromosome"/>
</dbReference>
<dbReference type="GO" id="GO:1990904">
    <property type="term" value="C:ribonucleoprotein complex"/>
    <property type="evidence" value="ECO:0007669"/>
    <property type="project" value="UniProtKB-KW"/>
</dbReference>
<dbReference type="GO" id="GO:0005840">
    <property type="term" value="C:ribosome"/>
    <property type="evidence" value="ECO:0007669"/>
    <property type="project" value="UniProtKB-KW"/>
</dbReference>
<dbReference type="GO" id="GO:0019843">
    <property type="term" value="F:rRNA binding"/>
    <property type="evidence" value="ECO:0007669"/>
    <property type="project" value="UniProtKB-UniRule"/>
</dbReference>
<dbReference type="GO" id="GO:0003735">
    <property type="term" value="F:structural constituent of ribosome"/>
    <property type="evidence" value="ECO:0007669"/>
    <property type="project" value="InterPro"/>
</dbReference>
<dbReference type="GO" id="GO:0006412">
    <property type="term" value="P:translation"/>
    <property type="evidence" value="ECO:0007669"/>
    <property type="project" value="UniProtKB-UniRule"/>
</dbReference>
<dbReference type="Gene3D" id="3.10.430.100">
    <property type="entry name" value="Ribosomal protein L9, C-terminal domain"/>
    <property type="match status" value="1"/>
</dbReference>
<dbReference type="Gene3D" id="3.40.5.10">
    <property type="entry name" value="Ribosomal protein L9, N-terminal domain"/>
    <property type="match status" value="1"/>
</dbReference>
<dbReference type="HAMAP" id="MF_00503">
    <property type="entry name" value="Ribosomal_bL9"/>
    <property type="match status" value="1"/>
</dbReference>
<dbReference type="InterPro" id="IPR000244">
    <property type="entry name" value="Ribosomal_bL9"/>
</dbReference>
<dbReference type="InterPro" id="IPR009027">
    <property type="entry name" value="Ribosomal_bL9/RNase_H1_N"/>
</dbReference>
<dbReference type="InterPro" id="IPR020594">
    <property type="entry name" value="Ribosomal_bL9_bac/chp"/>
</dbReference>
<dbReference type="InterPro" id="IPR020069">
    <property type="entry name" value="Ribosomal_bL9_C"/>
</dbReference>
<dbReference type="InterPro" id="IPR036791">
    <property type="entry name" value="Ribosomal_bL9_C_sf"/>
</dbReference>
<dbReference type="InterPro" id="IPR020070">
    <property type="entry name" value="Ribosomal_bL9_N"/>
</dbReference>
<dbReference type="InterPro" id="IPR036935">
    <property type="entry name" value="Ribosomal_bL9_N_sf"/>
</dbReference>
<dbReference type="NCBIfam" id="TIGR00158">
    <property type="entry name" value="L9"/>
    <property type="match status" value="1"/>
</dbReference>
<dbReference type="PANTHER" id="PTHR21368">
    <property type="entry name" value="50S RIBOSOMAL PROTEIN L9"/>
    <property type="match status" value="1"/>
</dbReference>
<dbReference type="Pfam" id="PF03948">
    <property type="entry name" value="Ribosomal_L9_C"/>
    <property type="match status" value="1"/>
</dbReference>
<dbReference type="Pfam" id="PF01281">
    <property type="entry name" value="Ribosomal_L9_N"/>
    <property type="match status" value="1"/>
</dbReference>
<dbReference type="SUPFAM" id="SSF55658">
    <property type="entry name" value="L9 N-domain-like"/>
    <property type="match status" value="1"/>
</dbReference>
<dbReference type="SUPFAM" id="SSF55653">
    <property type="entry name" value="Ribosomal protein L9 C-domain"/>
    <property type="match status" value="1"/>
</dbReference>
<dbReference type="PROSITE" id="PS00651">
    <property type="entry name" value="RIBOSOMAL_L9"/>
    <property type="match status" value="1"/>
</dbReference>